<name>HUTU_STAAW</name>
<evidence type="ECO:0000255" key="1">
    <source>
        <dbReference type="HAMAP-Rule" id="MF_00577"/>
    </source>
</evidence>
<feature type="chain" id="PRO_0000207358" description="Urocanate hydratase">
    <location>
        <begin position="1"/>
        <end position="553"/>
    </location>
</feature>
<feature type="binding site" evidence="1">
    <location>
        <begin position="45"/>
        <end position="46"/>
    </location>
    <ligand>
        <name>NAD(+)</name>
        <dbReference type="ChEBI" id="CHEBI:57540"/>
    </ligand>
</feature>
<feature type="binding site" evidence="1">
    <location>
        <position position="123"/>
    </location>
    <ligand>
        <name>NAD(+)</name>
        <dbReference type="ChEBI" id="CHEBI:57540"/>
    </ligand>
</feature>
<feature type="binding site" evidence="1">
    <location>
        <begin position="169"/>
        <end position="171"/>
    </location>
    <ligand>
        <name>NAD(+)</name>
        <dbReference type="ChEBI" id="CHEBI:57540"/>
    </ligand>
</feature>
<feature type="binding site" evidence="1">
    <location>
        <position position="189"/>
    </location>
    <ligand>
        <name>NAD(+)</name>
        <dbReference type="ChEBI" id="CHEBI:57540"/>
    </ligand>
</feature>
<feature type="binding site" evidence="1">
    <location>
        <position position="194"/>
    </location>
    <ligand>
        <name>NAD(+)</name>
        <dbReference type="ChEBI" id="CHEBI:57540"/>
    </ligand>
</feature>
<feature type="binding site" evidence="1">
    <location>
        <begin position="235"/>
        <end position="236"/>
    </location>
    <ligand>
        <name>NAD(+)</name>
        <dbReference type="ChEBI" id="CHEBI:57540"/>
    </ligand>
</feature>
<feature type="binding site" evidence="1">
    <location>
        <begin position="256"/>
        <end position="260"/>
    </location>
    <ligand>
        <name>NAD(+)</name>
        <dbReference type="ChEBI" id="CHEBI:57540"/>
    </ligand>
</feature>
<feature type="binding site" evidence="1">
    <location>
        <begin position="266"/>
        <end position="267"/>
    </location>
    <ligand>
        <name>NAD(+)</name>
        <dbReference type="ChEBI" id="CHEBI:57540"/>
    </ligand>
</feature>
<feature type="binding site" evidence="1">
    <location>
        <position position="315"/>
    </location>
    <ligand>
        <name>NAD(+)</name>
        <dbReference type="ChEBI" id="CHEBI:57540"/>
    </ligand>
</feature>
<feature type="binding site" evidence="1">
    <location>
        <position position="485"/>
    </location>
    <ligand>
        <name>NAD(+)</name>
        <dbReference type="ChEBI" id="CHEBI:57540"/>
    </ligand>
</feature>
<organism>
    <name type="scientific">Staphylococcus aureus (strain MW2)</name>
    <dbReference type="NCBI Taxonomy" id="196620"/>
    <lineage>
        <taxon>Bacteria</taxon>
        <taxon>Bacillati</taxon>
        <taxon>Bacillota</taxon>
        <taxon>Bacilli</taxon>
        <taxon>Bacillales</taxon>
        <taxon>Staphylococcaceae</taxon>
        <taxon>Staphylococcus</taxon>
    </lineage>
</organism>
<keyword id="KW-0963">Cytoplasm</keyword>
<keyword id="KW-0369">Histidine metabolism</keyword>
<keyword id="KW-0456">Lyase</keyword>
<keyword id="KW-0520">NAD</keyword>
<protein>
    <recommendedName>
        <fullName evidence="1">Urocanate hydratase</fullName>
        <shortName evidence="1">Urocanase</shortName>
        <ecNumber evidence="1">4.2.1.49</ecNumber>
    </recommendedName>
    <alternativeName>
        <fullName evidence="1">Imidazolonepropionate hydrolase</fullName>
    </alternativeName>
</protein>
<comment type="function">
    <text evidence="1">Catalyzes the conversion of urocanate to 4-imidazolone-5-propionate.</text>
</comment>
<comment type="catalytic activity">
    <reaction evidence="1">
        <text>4-imidazolone-5-propanoate = trans-urocanate + H2O</text>
        <dbReference type="Rhea" id="RHEA:13101"/>
        <dbReference type="ChEBI" id="CHEBI:15377"/>
        <dbReference type="ChEBI" id="CHEBI:17771"/>
        <dbReference type="ChEBI" id="CHEBI:77893"/>
        <dbReference type="EC" id="4.2.1.49"/>
    </reaction>
</comment>
<comment type="cofactor">
    <cofactor evidence="1">
        <name>NAD(+)</name>
        <dbReference type="ChEBI" id="CHEBI:57540"/>
    </cofactor>
    <text evidence="1">Binds 1 NAD(+) per subunit.</text>
</comment>
<comment type="pathway">
    <text evidence="1">Amino-acid degradation; L-histidine degradation into L-glutamate; N-formimidoyl-L-glutamate from L-histidine: step 2/3.</text>
</comment>
<comment type="subcellular location">
    <subcellularLocation>
        <location evidence="1">Cytoplasm</location>
    </subcellularLocation>
</comment>
<comment type="similarity">
    <text evidence="1">Belongs to the urocanase family.</text>
</comment>
<accession>P67418</accession>
<accession>Q99RU2</accession>
<reference key="1">
    <citation type="journal article" date="2002" name="Lancet">
        <title>Genome and virulence determinants of high virulence community-acquired MRSA.</title>
        <authorList>
            <person name="Baba T."/>
            <person name="Takeuchi F."/>
            <person name="Kuroda M."/>
            <person name="Yuzawa H."/>
            <person name="Aoki K."/>
            <person name="Oguchi A."/>
            <person name="Nagai Y."/>
            <person name="Iwama N."/>
            <person name="Asano K."/>
            <person name="Naimi T."/>
            <person name="Kuroda H."/>
            <person name="Cui L."/>
            <person name="Yamamoto K."/>
            <person name="Hiramatsu K."/>
        </authorList>
    </citation>
    <scope>NUCLEOTIDE SEQUENCE [LARGE SCALE GENOMIC DNA]</scope>
    <source>
        <strain>MW2</strain>
    </source>
</reference>
<proteinExistence type="inferred from homology"/>
<gene>
    <name evidence="1" type="primary">hutU</name>
    <name type="ordered locus">MW2252</name>
</gene>
<dbReference type="EC" id="4.2.1.49" evidence="1"/>
<dbReference type="EMBL" id="BA000033">
    <property type="protein sequence ID" value="BAB96117.1"/>
    <property type="molecule type" value="Genomic_DNA"/>
</dbReference>
<dbReference type="RefSeq" id="WP_001226823.1">
    <property type="nucleotide sequence ID" value="NC_003923.1"/>
</dbReference>
<dbReference type="SMR" id="P67418"/>
<dbReference type="KEGG" id="sam:MW2252"/>
<dbReference type="HOGENOM" id="CLU_018868_0_1_9"/>
<dbReference type="UniPathway" id="UPA00379">
    <property type="reaction ID" value="UER00550"/>
</dbReference>
<dbReference type="GO" id="GO:0005737">
    <property type="term" value="C:cytoplasm"/>
    <property type="evidence" value="ECO:0007669"/>
    <property type="project" value="UniProtKB-SubCell"/>
</dbReference>
<dbReference type="GO" id="GO:0016153">
    <property type="term" value="F:urocanate hydratase activity"/>
    <property type="evidence" value="ECO:0007669"/>
    <property type="project" value="UniProtKB-UniRule"/>
</dbReference>
<dbReference type="GO" id="GO:0019556">
    <property type="term" value="P:L-histidine catabolic process to glutamate and formamide"/>
    <property type="evidence" value="ECO:0007669"/>
    <property type="project" value="UniProtKB-UniPathway"/>
</dbReference>
<dbReference type="GO" id="GO:0019557">
    <property type="term" value="P:L-histidine catabolic process to glutamate and formate"/>
    <property type="evidence" value="ECO:0007669"/>
    <property type="project" value="UniProtKB-UniPathway"/>
</dbReference>
<dbReference type="FunFam" id="3.40.50.10730:FF:000001">
    <property type="entry name" value="Urocanate hydratase"/>
    <property type="match status" value="1"/>
</dbReference>
<dbReference type="Gene3D" id="3.40.50.10730">
    <property type="entry name" value="Urocanase like domains"/>
    <property type="match status" value="1"/>
</dbReference>
<dbReference type="Gene3D" id="3.40.1770.10">
    <property type="entry name" value="Urocanase superfamily"/>
    <property type="match status" value="1"/>
</dbReference>
<dbReference type="HAMAP" id="MF_00577">
    <property type="entry name" value="HutU"/>
    <property type="match status" value="1"/>
</dbReference>
<dbReference type="InterPro" id="IPR055351">
    <property type="entry name" value="Urocanase"/>
</dbReference>
<dbReference type="InterPro" id="IPR023637">
    <property type="entry name" value="Urocanase-like"/>
</dbReference>
<dbReference type="InterPro" id="IPR035401">
    <property type="entry name" value="Urocanase_C"/>
</dbReference>
<dbReference type="InterPro" id="IPR038364">
    <property type="entry name" value="Urocanase_central_sf"/>
</dbReference>
<dbReference type="InterPro" id="IPR023636">
    <property type="entry name" value="Urocanase_CS"/>
</dbReference>
<dbReference type="InterPro" id="IPR035400">
    <property type="entry name" value="Urocanase_N"/>
</dbReference>
<dbReference type="InterPro" id="IPR035085">
    <property type="entry name" value="Urocanase_Rossmann-like"/>
</dbReference>
<dbReference type="InterPro" id="IPR036190">
    <property type="entry name" value="Urocanase_sf"/>
</dbReference>
<dbReference type="NCBIfam" id="TIGR01228">
    <property type="entry name" value="hutU"/>
    <property type="match status" value="1"/>
</dbReference>
<dbReference type="NCBIfam" id="NF003820">
    <property type="entry name" value="PRK05414.1"/>
    <property type="match status" value="1"/>
</dbReference>
<dbReference type="PANTHER" id="PTHR12216">
    <property type="entry name" value="UROCANATE HYDRATASE"/>
    <property type="match status" value="1"/>
</dbReference>
<dbReference type="PANTHER" id="PTHR12216:SF4">
    <property type="entry name" value="UROCANATE HYDRATASE"/>
    <property type="match status" value="1"/>
</dbReference>
<dbReference type="Pfam" id="PF01175">
    <property type="entry name" value="Urocanase"/>
    <property type="match status" value="1"/>
</dbReference>
<dbReference type="Pfam" id="PF17392">
    <property type="entry name" value="Urocanase_C"/>
    <property type="match status" value="1"/>
</dbReference>
<dbReference type="Pfam" id="PF17391">
    <property type="entry name" value="Urocanase_N"/>
    <property type="match status" value="1"/>
</dbReference>
<dbReference type="PIRSF" id="PIRSF001423">
    <property type="entry name" value="Urocanate_hydrat"/>
    <property type="match status" value="1"/>
</dbReference>
<dbReference type="SUPFAM" id="SSF111326">
    <property type="entry name" value="Urocanase"/>
    <property type="match status" value="1"/>
</dbReference>
<dbReference type="PROSITE" id="PS01233">
    <property type="entry name" value="UROCANASE"/>
    <property type="match status" value="1"/>
</dbReference>
<sequence length="553" mass="60633">MRKIQAKKGLSIECKGWEQEAVLRMLYNNLDPEVAERPEDLVVYGGIGKAARNWEAFEAIEKTLRELESDETMLVQSGKPVAVFKTHEEAPRVLISNSVLVPEWANWDHFNELDKKGLIMYGQMTAGSWIYIGSQGIVQGTYETFAELGNQHFNGDLAGTVTLTAGLGGMGGAQPLAITMNHGVAICVDVDETRVDKRIDTKYCDVKTADLDEALKLAEEAKERGEGLSIGLVGNAVDIHQAILEKGFKIDIITDQTSAHDPLNGYVPQGYSVEEAKVLREKDPKKYVELSQASMAKHVELMLEFQKRGAVAFDYGNNIRQVAFNNGVKNAFDFPGFVPAYIRPLFCEGKGPFRFAALSGDPKDIERADEEMRKLFPENEKLLRWLDLAEEKISYQGLPSRIAWLGYGERAKMGLALNRLVRDGEISAPIVIGRDHLDAGSVASPNRETESMKDGSDAVGDWAVLNALINTAAGGSWISFHHGGGVGMGYSLHAGMVVVADGSERAERRLERVLTTDPGMGVARHVDAGYDIAIQTAKEKGIHIPMIDKAGDK</sequence>